<name>PANK2_HUMAN</name>
<keyword id="KW-0002">3D-structure</keyword>
<keyword id="KW-0024">Alternative initiation</keyword>
<keyword id="KW-0025">Alternative splicing</keyword>
<keyword id="KW-0037">Angiogenesis</keyword>
<keyword id="KW-0067">ATP-binding</keyword>
<keyword id="KW-0173">Coenzyme A biosynthesis</keyword>
<keyword id="KW-0963">Cytoplasm</keyword>
<keyword id="KW-0903">Direct protein sequencing</keyword>
<keyword id="KW-0225">Disease variant</keyword>
<keyword id="KW-0418">Kinase</keyword>
<keyword id="KW-0496">Mitochondrion</keyword>
<keyword id="KW-0523">Neurodegeneration</keyword>
<keyword id="KW-0547">Nucleotide-binding</keyword>
<keyword id="KW-0539">Nucleus</keyword>
<keyword id="KW-0597">Phosphoprotein</keyword>
<keyword id="KW-1267">Proteomics identification</keyword>
<keyword id="KW-1185">Reference proteome</keyword>
<keyword id="KW-0808">Transferase</keyword>
<keyword id="KW-0809">Transit peptide</keyword>
<feature type="transit peptide" description="Mitochondrion" evidence="8">
    <location>
        <begin position="1"/>
        <end position="31"/>
    </location>
</feature>
<feature type="chain" id="PRO_0000023201" description="Pantothenate kinase 2, mitochondrial intermediate form" evidence="8">
    <location>
        <begin position="32"/>
        <end position="570"/>
    </location>
</feature>
<feature type="chain" id="PRO_0000452676" description="Pantothenate kinase 2, mitochondrial mature form" evidence="8">
    <location>
        <begin position="141"/>
        <end position="570"/>
    </location>
</feature>
<feature type="region of interest" description="Disordered" evidence="3">
    <location>
        <begin position="34"/>
        <end position="94"/>
    </location>
</feature>
<feature type="region of interest" description="Disordered" evidence="3">
    <location>
        <begin position="127"/>
        <end position="198"/>
    </location>
</feature>
<feature type="short sequence motif" description="Nucleolar localization signal" evidence="14">
    <location>
        <begin position="82"/>
        <end position="94"/>
    </location>
</feature>
<feature type="short sequence motif" description="Nuclear export signal" evidence="14">
    <location>
        <begin position="268"/>
        <end position="275"/>
    </location>
</feature>
<feature type="compositionally biased region" description="Basic residues" evidence="3">
    <location>
        <begin position="84"/>
        <end position="93"/>
    </location>
</feature>
<feature type="compositionally biased region" description="Basic and acidic residues" evidence="3">
    <location>
        <begin position="155"/>
        <end position="164"/>
    </location>
</feature>
<feature type="compositionally biased region" description="Low complexity" evidence="3">
    <location>
        <begin position="168"/>
        <end position="179"/>
    </location>
</feature>
<feature type="active site" description="Proton acceptor" evidence="2">
    <location>
        <position position="338"/>
    </location>
</feature>
<feature type="binding site" evidence="1">
    <location>
        <position position="392"/>
    </location>
    <ligand>
        <name>acetyl-CoA</name>
        <dbReference type="ChEBI" id="CHEBI:57288"/>
    </ligand>
</feature>
<feature type="binding site" evidence="1">
    <location>
        <position position="395"/>
    </location>
    <ligand>
        <name>acetyl-CoA</name>
        <dbReference type="ChEBI" id="CHEBI:57288"/>
    </ligand>
</feature>
<feature type="binding site" evidence="1">
    <location>
        <position position="407"/>
    </location>
    <ligand>
        <name>acetyl-CoA</name>
        <dbReference type="ChEBI" id="CHEBI:57288"/>
    </ligand>
</feature>
<feature type="site" description="Cleavage; by MPP" evidence="8">
    <location>
        <begin position="140"/>
        <end position="141"/>
    </location>
</feature>
<feature type="modified residue" description="Phosphoserine" evidence="22 23 25 26 27">
    <location>
        <position position="168"/>
    </location>
</feature>
<feature type="modified residue" description="Phosphoserine" evidence="22 23">
    <location>
        <position position="169"/>
    </location>
</feature>
<feature type="modified residue" description="Phosphoserine" evidence="22 23 24 25 26 27">
    <location>
        <position position="189"/>
    </location>
</feature>
<feature type="splice variant" id="VSP_007424" description="In isoform 3." evidence="20">
    <location>
        <begin position="1"/>
        <end position="291"/>
    </location>
</feature>
<feature type="splice variant" id="VSP_018825" description="In isoform 2." evidence="21">
    <location>
        <begin position="1"/>
        <end position="123"/>
    </location>
</feature>
<feature type="splice variant" id="VSP_038494" description="In isoform 4." evidence="21">
    <location>
        <begin position="1"/>
        <end position="110"/>
    </location>
</feature>
<feature type="splice variant" id="VSP_038495" description="In isoform 4." evidence="21">
    <original>L</original>
    <variation>M</variation>
    <location>
        <position position="111"/>
    </location>
</feature>
<feature type="sequence variant" id="VAR_054484" description="In dbSNP:rs71647827." evidence="19">
    <original>R</original>
    <variation>P</variation>
    <location>
        <position position="94"/>
    </location>
</feature>
<feature type="sequence variant" id="VAR_015152" description="In dbSNP:rs71647828." evidence="4 19">
    <original>L</original>
    <variation>Q</variation>
    <location>
        <position position="111"/>
    </location>
</feature>
<feature type="sequence variant" id="VAR_015153" description="In dbSNP:rs3737084." evidence="4 7 19">
    <original>G</original>
    <variation>A</variation>
    <location>
        <position position="126"/>
    </location>
</feature>
<feature type="sequence variant" id="VAR_060934" description="In NBIA1; no effect on enzyme activity or its mitochondrial localization; dbSNP:rs765679726." evidence="6 8">
    <original>E</original>
    <variation>G</variation>
    <location>
        <position position="134"/>
    </location>
</feature>
<feature type="sequence variant" id="VAR_015154" description="In NBIA1; loss of enzyme activity; no effect on its mitochondrial localization." evidence="4 8 10">
    <original>G</original>
    <variation>V</variation>
    <location>
        <position position="219"/>
    </location>
</feature>
<feature type="sequence variant" id="VAR_076594" description="In NBIA1; uncertain significance." evidence="16">
    <original>D</original>
    <variation>G</variation>
    <location>
        <position position="232"/>
    </location>
</feature>
<feature type="sequence variant" id="VAR_015155" description="In NBIA1; no effect on enzyme activity or its mitochondrial localization; dbSNP:rs137852965." evidence="4 8 10">
    <original>T</original>
    <variation>A</variation>
    <location>
        <position position="234"/>
    </location>
</feature>
<feature type="sequence variant" id="VAR_060935" description="In NBIA1." evidence="6">
    <original>R</original>
    <variation>P</variation>
    <location>
        <position position="249"/>
    </location>
</feature>
<feature type="sequence variant" id="VAR_015156" description="In NBIA1; no effect on enzyme activity; dbSNP:rs137852961." evidence="4 10">
    <original>R</original>
    <variation>W</variation>
    <location>
        <position position="264"/>
    </location>
</feature>
<feature type="sequence variant" id="VAR_015157" description="In NBIA1; dbSNP:rs137852966." evidence="4">
    <original>R</original>
    <variation>C</variation>
    <location>
        <position position="278"/>
    </location>
</feature>
<feature type="sequence variant" id="VAR_060936" description="In NBIA1; dbSNP:rs1348762206." evidence="6">
    <original>R</original>
    <variation>L</variation>
    <location>
        <position position="278"/>
    </location>
</feature>
<feature type="sequence variant" id="VAR_015158" description="In NBIA1." evidence="4">
    <original>L</original>
    <variation>V</variation>
    <location>
        <position position="282"/>
    </location>
</feature>
<feature type="sequence variant" id="VAR_015159" description="In NBIA1; no effect on enzyme activity; dbSNP:rs137852962." evidence="4 10">
    <original>R</original>
    <variation>C</variation>
    <location>
        <position position="286"/>
    </location>
</feature>
<feature type="sequence variant" id="VAR_060937" description="In NBIA1; dbSNP:rs974575417." evidence="6">
    <original>E</original>
    <variation>D</variation>
    <location>
        <position position="322"/>
    </location>
</feature>
<feature type="sequence variant" id="VAR_060938" description="In NBIA1; dbSNP:rs768230831." evidence="6">
    <original>E</original>
    <variation>G</variation>
    <location>
        <position position="322"/>
    </location>
</feature>
<feature type="sequence variant" id="VAR_015160" description="In NBIA1; no effect on enzyme activity." evidence="4 10">
    <original>T</original>
    <variation>I</variation>
    <location>
        <position position="327"/>
    </location>
</feature>
<feature type="sequence variant" id="VAR_015161" description="In NBIA1; no effect on enzyme activity; dbSNP:rs137852964." evidence="4 10">
    <original>S</original>
    <variation>P</variation>
    <location>
        <position position="351"/>
    </location>
</feature>
<feature type="sequence variant" id="VAR_015162" description="In NBIA1; dbSNP:rs746484727." evidence="4">
    <original>N</original>
    <variation>S</variation>
    <location>
        <position position="355"/>
    </location>
</feature>
<feature type="sequence variant" id="VAR_060939" description="In NBIA1; dbSNP:rs754521581." evidence="6">
    <original>R</original>
    <variation>Q</variation>
    <location>
        <position position="357"/>
    </location>
</feature>
<feature type="sequence variant" id="VAR_076595" description="In NBIA1; uncertain significance." evidence="13">
    <original>F</original>
    <variation>S</variation>
    <location>
        <position position="377"/>
    </location>
</feature>
<feature type="sequence variant" id="VAR_060940" description="In NBIA1; dbSNP:rs759223327." evidence="6">
    <original>A</original>
    <variation>T</variation>
    <location>
        <position position="398"/>
    </location>
</feature>
<feature type="sequence variant" id="VAR_015163" description="In NBIA1; no effect on enzyme activity or its inhibition by acetyl CoA; dbSNP:rs752078407." evidence="4 10">
    <original>N</original>
    <variation>I</variation>
    <location>
        <position position="404"/>
    </location>
</feature>
<feature type="sequence variant" id="VAR_015164" description="In NBIA1; dbSNP:rs750176786." evidence="4">
    <original>L</original>
    <variation>P</variation>
    <location>
        <position position="413"/>
    </location>
</feature>
<feature type="sequence variant" id="VAR_060941" description="In NBIA1; dbSNP:rs1064794317." evidence="6">
    <location>
        <position position="425"/>
    </location>
</feature>
<feature type="sequence variant" id="VAR_060942" description="In NBIA1; dbSNP:rs1012947103." evidence="6">
    <original>C</original>
    <variation>Y</variation>
    <location>
        <position position="428"/>
    </location>
</feature>
<feature type="sequence variant" id="VAR_060943" description="In NBIA1." evidence="6">
    <original>D</original>
    <variation>N</variation>
    <location>
        <position position="447"/>
    </location>
</feature>
<feature type="sequence variant" id="VAR_015165" description="In NBIA1; significant loss of enzyme activity; no effect on its mitochondrial localization or its inhibition by acetyl CoA; dbSNP:rs137852963." evidence="4 8 10">
    <original>S</original>
    <variation>N</variation>
    <location>
        <position position="471"/>
    </location>
</feature>
<feature type="sequence variant" id="VAR_076596" description="In NBIA1; uncertain significance." evidence="17">
    <original>L</original>
    <variation>P</variation>
    <location>
        <position position="489"/>
    </location>
</feature>
<feature type="sequence variant" id="VAR_015166" description="In NBIA1; dbSNP:rs2090571848." evidence="4">
    <original>I</original>
    <variation>T</variation>
    <location>
        <position position="497"/>
    </location>
</feature>
<feature type="sequence variant" id="VAR_015167" description="In NBIA1; significant loss of enzyme activity; dbSNP:rs759332123." evidence="4 10">
    <original>N</original>
    <variation>I</variation>
    <location>
        <position position="500"/>
    </location>
</feature>
<feature type="sequence variant" id="VAR_060944" description="In NBIA1; dbSNP:rs775459398." evidence="6">
    <original>I</original>
    <variation>T</variation>
    <location>
        <position position="501"/>
    </location>
</feature>
<feature type="sequence variant" id="VAR_060945" description="In NBIA1; no effect on enzyme activity." evidence="6 10">
    <original>A</original>
    <variation>V</variation>
    <location>
        <position position="509"/>
    </location>
</feature>
<feature type="sequence variant" id="VAR_060946" description="In NBIA1; dbSNP:rs767653843." evidence="6">
    <original>N</original>
    <variation>D</variation>
    <location>
        <position position="511"/>
    </location>
</feature>
<feature type="sequence variant" id="VAR_015168" description="In NBIA1; loss of enzyme activity; no effect on its mitochondrial localization; loss of proteolytic cleavage to yield the mature form; dbSNP:rs137852959." evidence="4 8 9 10 15">
    <original>G</original>
    <variation>R</variation>
    <location>
        <position position="521"/>
    </location>
</feature>
<feature type="sequence variant" id="VAR_015169" description="In NBIA1; uncertain significance; no effect on enzyme activity, mitochondrial localization or its inhibition by acetyl CoA; dbSNP:rs137852967." evidence="4 8 10 17">
    <original>T</original>
    <variation>M</variation>
    <location>
        <position position="528"/>
    </location>
</feature>
<feature type="sequence variant" id="VAR_060947" description="In NBIA1; no effect on enzyme activity; dbSNP:rs2090601656." evidence="6 10">
    <original>R</original>
    <variation>W</variation>
    <location>
        <position position="532"/>
    </location>
</feature>
<feature type="sequence variant" id="VAR_076597" description="In NBIA1; uncertain significance." evidence="15">
    <original>G</original>
    <variation>S</variation>
    <location>
        <position position="555"/>
    </location>
</feature>
<feature type="sequence variant" id="VAR_060948" description="In NBIA1; dbSNP:rs1324077575." evidence="6">
    <original>L</original>
    <variation>P</variation>
    <location>
        <position position="563"/>
    </location>
</feature>
<feature type="sequence variant" id="VAR_060949" description="In NBIA1; dbSNP:rs41279408." evidence="6 9">
    <original>P</original>
    <variation>L</variation>
    <location>
        <position position="570"/>
    </location>
</feature>
<feature type="mutagenesis site" description="Loss of nuclear localization." evidence="14">
    <original>RWRNGRGGRPRAR</original>
    <variation>AWANGAGGAPAAA</variation>
    <location>
        <begin position="82"/>
        <end position="94"/>
    </location>
</feature>
<feature type="mutagenesis site" description="Loss of export from nucleus." evidence="14">
    <original>LELKDLTL</original>
    <variation>AEAKDATA</variation>
    <location>
        <begin position="268"/>
        <end position="275"/>
    </location>
</feature>
<feature type="sequence conflict" description="In Ref. 2; BAB13897." evidence="21" ref="2">
    <original>R</original>
    <variation>G</variation>
    <location>
        <position position="460"/>
    </location>
</feature>
<feature type="sequence conflict" description="In Ref. 2; BAB13897." evidence="21" ref="2">
    <original>M</original>
    <variation>K</variation>
    <location>
        <position position="475"/>
    </location>
</feature>
<feature type="strand" evidence="28">
    <location>
        <begin position="213"/>
        <end position="218"/>
    </location>
</feature>
<feature type="strand" evidence="28">
    <location>
        <begin position="220"/>
        <end position="231"/>
    </location>
</feature>
<feature type="helix" evidence="28">
    <location>
        <begin position="235"/>
        <end position="240"/>
    </location>
</feature>
<feature type="helix" evidence="28">
    <location>
        <begin position="243"/>
        <end position="254"/>
    </location>
</feature>
<feature type="strand" evidence="28">
    <location>
        <begin position="256"/>
        <end position="258"/>
    </location>
</feature>
<feature type="turn" evidence="28">
    <location>
        <begin position="259"/>
        <end position="261"/>
    </location>
</feature>
<feature type="strand" evidence="28">
    <location>
        <begin position="262"/>
        <end position="264"/>
    </location>
</feature>
<feature type="helix" evidence="28">
    <location>
        <begin position="266"/>
        <end position="268"/>
    </location>
</feature>
<feature type="strand" evidence="28">
    <location>
        <begin position="270"/>
        <end position="275"/>
    </location>
</feature>
<feature type="strand" evidence="28">
    <location>
        <begin position="278"/>
        <end position="288"/>
    </location>
</feature>
<feature type="helix" evidence="28">
    <location>
        <begin position="289"/>
        <end position="291"/>
    </location>
</feature>
<feature type="helix" evidence="28">
    <location>
        <begin position="292"/>
        <end position="301"/>
    </location>
</feature>
<feature type="helix" evidence="28">
    <location>
        <begin position="304"/>
        <end position="306"/>
    </location>
</feature>
<feature type="strand" evidence="28">
    <location>
        <begin position="309"/>
        <end position="315"/>
    </location>
</feature>
<feature type="helix" evidence="28">
    <location>
        <begin position="317"/>
        <end position="320"/>
    </location>
</feature>
<feature type="helix" evidence="28">
    <location>
        <begin position="322"/>
        <end position="329"/>
    </location>
</feature>
<feature type="strand" evidence="28">
    <location>
        <begin position="332"/>
        <end position="336"/>
    </location>
</feature>
<feature type="helix" evidence="28">
    <location>
        <begin position="338"/>
        <end position="352"/>
    </location>
</feature>
<feature type="strand" evidence="28">
    <location>
        <begin position="354"/>
        <end position="357"/>
    </location>
</feature>
<feature type="strand" evidence="28">
    <location>
        <begin position="359"/>
        <end position="365"/>
    </location>
</feature>
<feature type="turn" evidence="28">
    <location>
        <begin position="369"/>
        <end position="371"/>
    </location>
</feature>
<feature type="strand" evidence="28">
    <location>
        <begin position="373"/>
        <end position="377"/>
    </location>
</feature>
<feature type="strand" evidence="28">
    <location>
        <begin position="384"/>
        <end position="403"/>
    </location>
</feature>
<feature type="strand" evidence="28">
    <location>
        <begin position="405"/>
        <end position="412"/>
    </location>
</feature>
<feature type="helix" evidence="28">
    <location>
        <begin position="415"/>
        <end position="426"/>
    </location>
</feature>
<feature type="helix" evidence="28">
    <location>
        <begin position="431"/>
        <end position="439"/>
    </location>
</feature>
<feature type="helix" evidence="28">
    <location>
        <begin position="443"/>
        <end position="445"/>
    </location>
</feature>
<feature type="strand" evidence="28">
    <location>
        <begin position="447"/>
        <end position="449"/>
    </location>
</feature>
<feature type="helix" evidence="28">
    <location>
        <begin position="450"/>
        <end position="454"/>
    </location>
</feature>
<feature type="helix" evidence="28">
    <location>
        <begin position="459"/>
        <end position="461"/>
    </location>
</feature>
<feature type="strand" evidence="28">
    <location>
        <begin position="467"/>
        <end position="470"/>
    </location>
</feature>
<feature type="turn" evidence="28">
    <location>
        <begin position="471"/>
        <end position="476"/>
    </location>
</feature>
<feature type="helix" evidence="28">
    <location>
        <begin position="478"/>
        <end position="483"/>
    </location>
</feature>
<feature type="helix" evidence="28">
    <location>
        <begin position="486"/>
        <end position="512"/>
    </location>
</feature>
<feature type="strand" evidence="28">
    <location>
        <begin position="516"/>
        <end position="521"/>
    </location>
</feature>
<feature type="helix" evidence="28">
    <location>
        <begin position="522"/>
        <end position="524"/>
    </location>
</feature>
<feature type="helix" evidence="28">
    <location>
        <begin position="528"/>
        <end position="541"/>
    </location>
</feature>
<feature type="turn" evidence="28">
    <location>
        <begin position="542"/>
        <end position="544"/>
    </location>
</feature>
<feature type="strand" evidence="28">
    <location>
        <begin position="547"/>
        <end position="553"/>
    </location>
</feature>
<feature type="helix" evidence="28">
    <location>
        <begin position="557"/>
        <end position="566"/>
    </location>
</feature>
<accession>Q9BZ23</accession>
<accession>B1AK33</accession>
<accession>B2Z3X0</accession>
<accession>D3DVZ0</accession>
<accession>Q5T7I2</accession>
<accession>Q5T7I4</accession>
<accession>Q7RTX5</accession>
<accession>Q8N7Q4</accession>
<accession>Q8TCR5</accession>
<accession>Q9BYW5</accession>
<accession>Q9HAF2</accession>
<sequence>MRRLGPFHPRVHWAAPPSLSSGLHRLLFLRGTRIPSSTTLSPPRHDSLSLDGGTVNPPRVREPTGREAFGPSPASSDWLPARWRNGRGGRPRARLCSGWTAAEEARRNPTLGGLLGRQRLLLRMGGGRLGAPMERHGRASATSVSSAGEQAAGDPEGRRQEPLRRRASSASVPAVGASAEGTRRDRLGSYSGPTSVSRQRVESLRKKRPLFPWFGLDIGGTLVKLVYFEPKDITAEEEEEEVESLKSIRKYLTSNVAYGSTGIRDVHLELKDLTLCGRKGNLHFIRFPTHDMPAFIQMGRDKNFSSLHTVFCATGGGAYKFEQDFLTIGDLQLCKLDELDCLIKGILYIDSVGFNGRSQCYYFENPADSEKCQKLPFDLKNPYPLLLVNIGSGVSILAVYSKDNYKRVTGTSLGGGTFFGLCCLLTGCTTFEEALEMASRGDSTKVDKLVRDIYGGDYERFGLPGWAVASSFGNMMSKEKREAVSKEDLARATLITITNNIGSIARMCALNENINQVVFVGNFLRINTIAMRLLAYALDYWSKGQLKALFSEHEGYFGAVGALLELLKIP</sequence>
<organism>
    <name type="scientific">Homo sapiens</name>
    <name type="common">Human</name>
    <dbReference type="NCBI Taxonomy" id="9606"/>
    <lineage>
        <taxon>Eukaryota</taxon>
        <taxon>Metazoa</taxon>
        <taxon>Chordata</taxon>
        <taxon>Craniata</taxon>
        <taxon>Vertebrata</taxon>
        <taxon>Euteleostomi</taxon>
        <taxon>Mammalia</taxon>
        <taxon>Eutheria</taxon>
        <taxon>Euarchontoglires</taxon>
        <taxon>Primates</taxon>
        <taxon>Haplorrhini</taxon>
        <taxon>Catarrhini</taxon>
        <taxon>Hominidae</taxon>
        <taxon>Homo</taxon>
    </lineage>
</organism>
<gene>
    <name type="primary">PANK2</name>
    <name type="synonym">C20orf48</name>
</gene>
<dbReference type="EC" id="2.7.1.33" evidence="8 10 11 12"/>
<dbReference type="EMBL" id="AF494409">
    <property type="protein sequence ID" value="AAN32907.1"/>
    <property type="molecule type" value="mRNA"/>
</dbReference>
<dbReference type="EMBL" id="AK021791">
    <property type="protein sequence ID" value="BAB13897.1"/>
    <property type="molecule type" value="mRNA"/>
</dbReference>
<dbReference type="EMBL" id="AK097796">
    <property type="protein sequence ID" value="BAC05173.1"/>
    <property type="status" value="ALT_INIT"/>
    <property type="molecule type" value="mRNA"/>
</dbReference>
<dbReference type="EMBL" id="EU595875">
    <property type="protein sequence ID" value="ACD11492.1"/>
    <property type="molecule type" value="Genomic_DNA"/>
</dbReference>
<dbReference type="EMBL" id="AL031670">
    <property type="status" value="NOT_ANNOTATED_CDS"/>
    <property type="molecule type" value="Genomic_DNA"/>
</dbReference>
<dbReference type="EMBL" id="AL353194">
    <property type="status" value="NOT_ANNOTATED_CDS"/>
    <property type="molecule type" value="Genomic_DNA"/>
</dbReference>
<dbReference type="EMBL" id="CH471133">
    <property type="protein sequence ID" value="EAX10478.1"/>
    <property type="molecule type" value="Genomic_DNA"/>
</dbReference>
<dbReference type="EMBL" id="CH471133">
    <property type="protein sequence ID" value="EAX10476.1"/>
    <property type="molecule type" value="Genomic_DNA"/>
</dbReference>
<dbReference type="EMBL" id="AL713654">
    <property type="protein sequence ID" value="CAD28463.1"/>
    <property type="molecule type" value="mRNA"/>
</dbReference>
<dbReference type="EMBL" id="BK000010">
    <property type="protein sequence ID" value="DAA00004.1"/>
    <property type="molecule type" value="mRNA"/>
</dbReference>
<dbReference type="CCDS" id="CCDS13071.2">
    <molecule id="Q9BZ23-1"/>
</dbReference>
<dbReference type="CCDS" id="CCDS13072.1">
    <molecule id="Q9BZ23-2"/>
</dbReference>
<dbReference type="CCDS" id="CCDS93004.1">
    <molecule id="Q9BZ23-4"/>
</dbReference>
<dbReference type="RefSeq" id="NP_001311120.1">
    <molecule id="Q9BZ23-2"/>
    <property type="nucleotide sequence ID" value="NM_001324191.2"/>
</dbReference>
<dbReference type="RefSeq" id="NP_001373322.1">
    <molecule id="Q9BZ23-4"/>
    <property type="nucleotide sequence ID" value="NM_001386393.1"/>
</dbReference>
<dbReference type="RefSeq" id="NP_079236.3">
    <molecule id="Q9BZ23-2"/>
    <property type="nucleotide sequence ID" value="NM_024960.5"/>
</dbReference>
<dbReference type="RefSeq" id="NP_705902.2">
    <molecule id="Q9BZ23-1"/>
    <property type="nucleotide sequence ID" value="NM_153638.4"/>
</dbReference>
<dbReference type="RefSeq" id="NP_705904.1">
    <molecule id="Q9BZ23-2"/>
    <property type="nucleotide sequence ID" value="NM_153640.4"/>
</dbReference>
<dbReference type="RefSeq" id="XP_005260893.3">
    <property type="nucleotide sequence ID" value="XM_005260836.4"/>
</dbReference>
<dbReference type="PDB" id="5E26">
    <property type="method" value="X-ray"/>
    <property type="resolution" value="2.14 A"/>
    <property type="chains" value="A/B/C/D=205-568"/>
</dbReference>
<dbReference type="PDBsum" id="5E26"/>
<dbReference type="SMR" id="Q9BZ23"/>
<dbReference type="BioGRID" id="123079">
    <property type="interactions" value="37"/>
</dbReference>
<dbReference type="FunCoup" id="Q9BZ23">
    <property type="interactions" value="5168"/>
</dbReference>
<dbReference type="IntAct" id="Q9BZ23">
    <property type="interactions" value="26"/>
</dbReference>
<dbReference type="MINT" id="Q9BZ23"/>
<dbReference type="STRING" id="9606.ENSP00000313377"/>
<dbReference type="BindingDB" id="Q9BZ23"/>
<dbReference type="ChEMBL" id="CHEMBL3407327"/>
<dbReference type="GlyCosmos" id="Q9BZ23">
    <property type="glycosylation" value="1 site, 1 glycan"/>
</dbReference>
<dbReference type="GlyGen" id="Q9BZ23">
    <property type="glycosylation" value="2 sites, 1 O-linked glycan (1 site)"/>
</dbReference>
<dbReference type="iPTMnet" id="Q9BZ23"/>
<dbReference type="PhosphoSitePlus" id="Q9BZ23"/>
<dbReference type="BioMuta" id="PANK2"/>
<dbReference type="DMDM" id="118572682"/>
<dbReference type="jPOST" id="Q9BZ23"/>
<dbReference type="MassIVE" id="Q9BZ23"/>
<dbReference type="PaxDb" id="9606-ENSP00000313377"/>
<dbReference type="PeptideAtlas" id="Q9BZ23"/>
<dbReference type="ProteomicsDB" id="79754">
    <molecule id="Q9BZ23-1"/>
</dbReference>
<dbReference type="ProteomicsDB" id="79755">
    <molecule id="Q9BZ23-2"/>
</dbReference>
<dbReference type="ProteomicsDB" id="79756">
    <molecule id="Q9BZ23-3"/>
</dbReference>
<dbReference type="ProteomicsDB" id="79757">
    <molecule id="Q9BZ23-4"/>
</dbReference>
<dbReference type="Pumba" id="Q9BZ23"/>
<dbReference type="TopDownProteomics" id="Q9BZ23-1">
    <molecule id="Q9BZ23-1"/>
</dbReference>
<dbReference type="Antibodypedia" id="2051">
    <property type="antibodies" value="365 antibodies from 32 providers"/>
</dbReference>
<dbReference type="DNASU" id="80025"/>
<dbReference type="Ensembl" id="ENST00000316562.9">
    <molecule id="Q9BZ23-1"/>
    <property type="protein sequence ID" value="ENSP00000313377.4"/>
    <property type="gene ID" value="ENSG00000125779.24"/>
</dbReference>
<dbReference type="Ensembl" id="ENST00000497424.5">
    <molecule id="Q9BZ23-2"/>
    <property type="protein sequence ID" value="ENSP00000417609.1"/>
    <property type="gene ID" value="ENSG00000125779.24"/>
</dbReference>
<dbReference type="Ensembl" id="ENST00000610179.7">
    <molecule id="Q9BZ23-4"/>
    <property type="protein sequence ID" value="ENSP00000477429.2"/>
    <property type="gene ID" value="ENSG00000125779.24"/>
</dbReference>
<dbReference type="Ensembl" id="ENST00000621507.1">
    <molecule id="Q9BZ23-2"/>
    <property type="protein sequence ID" value="ENSP00000481523.1"/>
    <property type="gene ID" value="ENSG00000125779.24"/>
</dbReference>
<dbReference type="GeneID" id="80025"/>
<dbReference type="KEGG" id="hsa:80025"/>
<dbReference type="MANE-Select" id="ENST00000610179.7">
    <molecule id="Q9BZ23-4"/>
    <property type="protein sequence ID" value="ENSP00000477429.2"/>
    <property type="RefSeq nucleotide sequence ID" value="NM_001386393.1"/>
    <property type="RefSeq protein sequence ID" value="NP_001373322.1"/>
</dbReference>
<dbReference type="UCSC" id="uc002wkb.4">
    <molecule id="Q9BZ23-1"/>
    <property type="organism name" value="human"/>
</dbReference>
<dbReference type="AGR" id="HGNC:15894"/>
<dbReference type="CTD" id="80025"/>
<dbReference type="DisGeNET" id="80025"/>
<dbReference type="GeneCards" id="PANK2"/>
<dbReference type="GeneReviews" id="PANK2"/>
<dbReference type="HGNC" id="HGNC:15894">
    <property type="gene designation" value="PANK2"/>
</dbReference>
<dbReference type="HPA" id="ENSG00000125779">
    <property type="expression patterns" value="Low tissue specificity"/>
</dbReference>
<dbReference type="MalaCards" id="PANK2"/>
<dbReference type="MIM" id="234200">
    <property type="type" value="phenotype"/>
</dbReference>
<dbReference type="MIM" id="606157">
    <property type="type" value="gene"/>
</dbReference>
<dbReference type="neXtProt" id="NX_Q9BZ23"/>
<dbReference type="OpenTargets" id="ENSG00000125779"/>
<dbReference type="Orphanet" id="216873">
    <property type="disease" value="Atypical pantothenate kinase-associated neurodegeneration"/>
</dbReference>
<dbReference type="Orphanet" id="216866">
    <property type="disease" value="Classic pantothenate kinase-associated neurodegeneration"/>
</dbReference>
<dbReference type="PharmGKB" id="PA38048"/>
<dbReference type="VEuPathDB" id="HostDB:ENSG00000125779"/>
<dbReference type="eggNOG" id="KOG2201">
    <property type="taxonomic scope" value="Eukaryota"/>
</dbReference>
<dbReference type="GeneTree" id="ENSGT00940000157626"/>
<dbReference type="HOGENOM" id="CLU_011154_0_1_1"/>
<dbReference type="InParanoid" id="Q9BZ23"/>
<dbReference type="OMA" id="WSKGAKQ"/>
<dbReference type="OrthoDB" id="275583at2759"/>
<dbReference type="PAN-GO" id="Q9BZ23">
    <property type="GO annotations" value="4 GO annotations based on evolutionary models"/>
</dbReference>
<dbReference type="PhylomeDB" id="Q9BZ23"/>
<dbReference type="TreeFam" id="TF314866"/>
<dbReference type="BioCyc" id="MetaCyc:HS13177-MONOMER"/>
<dbReference type="BRENDA" id="2.7.1.33">
    <property type="organism ID" value="2681"/>
</dbReference>
<dbReference type="PathwayCommons" id="Q9BZ23"/>
<dbReference type="Reactome" id="R-HSA-196783">
    <property type="pathway name" value="Coenzyme A biosynthesis"/>
</dbReference>
<dbReference type="SABIO-RK" id="Q9BZ23"/>
<dbReference type="SignaLink" id="Q9BZ23"/>
<dbReference type="UniPathway" id="UPA00241">
    <property type="reaction ID" value="UER00352"/>
</dbReference>
<dbReference type="BioGRID-ORCS" id="80025">
    <property type="hits" value="9 hits in 1155 CRISPR screens"/>
</dbReference>
<dbReference type="ChiTaRS" id="PANK2">
    <property type="organism name" value="human"/>
</dbReference>
<dbReference type="EvolutionaryTrace" id="Q9BZ23"/>
<dbReference type="GeneWiki" id="PANK2_(gene)"/>
<dbReference type="GenomeRNAi" id="80025"/>
<dbReference type="Pharos" id="Q9BZ23">
    <property type="development level" value="Tbio"/>
</dbReference>
<dbReference type="PRO" id="PR:Q9BZ23"/>
<dbReference type="Proteomes" id="UP000005640">
    <property type="component" value="Chromosome 20"/>
</dbReference>
<dbReference type="RNAct" id="Q9BZ23">
    <property type="molecule type" value="protein"/>
</dbReference>
<dbReference type="Bgee" id="ENSG00000125779">
    <property type="expression patterns" value="Expressed in endothelial cell and 192 other cell types or tissues"/>
</dbReference>
<dbReference type="ExpressionAtlas" id="Q9BZ23">
    <property type="expression patterns" value="baseline and differential"/>
</dbReference>
<dbReference type="GO" id="GO:0005829">
    <property type="term" value="C:cytosol"/>
    <property type="evidence" value="ECO:0000314"/>
    <property type="project" value="HPA"/>
</dbReference>
<dbReference type="GO" id="GO:0005758">
    <property type="term" value="C:mitochondrial intermembrane space"/>
    <property type="evidence" value="ECO:0000314"/>
    <property type="project" value="UniProtKB"/>
</dbReference>
<dbReference type="GO" id="GO:0005739">
    <property type="term" value="C:mitochondrion"/>
    <property type="evidence" value="ECO:0000314"/>
    <property type="project" value="UniProtKB"/>
</dbReference>
<dbReference type="GO" id="GO:0005634">
    <property type="term" value="C:nucleus"/>
    <property type="evidence" value="ECO:0000314"/>
    <property type="project" value="UniProtKB"/>
</dbReference>
<dbReference type="GO" id="GO:0005524">
    <property type="term" value="F:ATP binding"/>
    <property type="evidence" value="ECO:0007669"/>
    <property type="project" value="UniProtKB-KW"/>
</dbReference>
<dbReference type="GO" id="GO:0004594">
    <property type="term" value="F:pantothenate kinase activity"/>
    <property type="evidence" value="ECO:0000315"/>
    <property type="project" value="UniProtKB"/>
</dbReference>
<dbReference type="GO" id="GO:0009060">
    <property type="term" value="P:aerobic respiration"/>
    <property type="evidence" value="ECO:0007669"/>
    <property type="project" value="Ensembl"/>
</dbReference>
<dbReference type="GO" id="GO:0001525">
    <property type="term" value="P:angiogenesis"/>
    <property type="evidence" value="ECO:0000315"/>
    <property type="project" value="UniProtKB"/>
</dbReference>
<dbReference type="GO" id="GO:0015937">
    <property type="term" value="P:coenzyme A biosynthetic process"/>
    <property type="evidence" value="ECO:0000318"/>
    <property type="project" value="GO_Central"/>
</dbReference>
<dbReference type="GO" id="GO:0007005">
    <property type="term" value="P:mitochondrion organization"/>
    <property type="evidence" value="ECO:0007669"/>
    <property type="project" value="Ensembl"/>
</dbReference>
<dbReference type="GO" id="GO:0015939">
    <property type="term" value="P:pantothenate metabolic process"/>
    <property type="evidence" value="ECO:0000303"/>
    <property type="project" value="ParkinsonsUK-UCL"/>
</dbReference>
<dbReference type="GO" id="GO:0016310">
    <property type="term" value="P:phosphorylation"/>
    <property type="evidence" value="ECO:0000303"/>
    <property type="project" value="ParkinsonsUK-UCL"/>
</dbReference>
<dbReference type="GO" id="GO:1904251">
    <property type="term" value="P:regulation of bile acid metabolic process"/>
    <property type="evidence" value="ECO:0000315"/>
    <property type="project" value="ParkinsonsUK-UCL"/>
</dbReference>
<dbReference type="GO" id="GO:0019217">
    <property type="term" value="P:regulation of fatty acid metabolic process"/>
    <property type="evidence" value="ECO:0000315"/>
    <property type="project" value="ParkinsonsUK-UCL"/>
</dbReference>
<dbReference type="GO" id="GO:0051881">
    <property type="term" value="P:regulation of mitochondrial membrane potential"/>
    <property type="evidence" value="ECO:0007669"/>
    <property type="project" value="Ensembl"/>
</dbReference>
<dbReference type="GO" id="GO:0090207">
    <property type="term" value="P:regulation of triglyceride metabolic process"/>
    <property type="evidence" value="ECO:0000315"/>
    <property type="project" value="ParkinsonsUK-UCL"/>
</dbReference>
<dbReference type="GO" id="GO:0007286">
    <property type="term" value="P:spermatid development"/>
    <property type="evidence" value="ECO:0007669"/>
    <property type="project" value="Ensembl"/>
</dbReference>
<dbReference type="CDD" id="cd24136">
    <property type="entry name" value="ASKHA_NBD_PanK-II_Pank2"/>
    <property type="match status" value="1"/>
</dbReference>
<dbReference type="FunFam" id="3.30.420.40:FF:000244">
    <property type="entry name" value="pantothenate kinase 1-like isoform X3"/>
    <property type="match status" value="1"/>
</dbReference>
<dbReference type="FunFam" id="3.30.420.510:FF:000001">
    <property type="entry name" value="pantothenate kinase 2, mitochondrial"/>
    <property type="match status" value="1"/>
</dbReference>
<dbReference type="FunFam" id="3.30.420.40:FF:000392">
    <property type="entry name" value="pantothenate kinase 3-like isoform X1"/>
    <property type="match status" value="1"/>
</dbReference>
<dbReference type="Gene3D" id="3.30.420.40">
    <property type="match status" value="1"/>
</dbReference>
<dbReference type="Gene3D" id="3.30.420.510">
    <property type="match status" value="1"/>
</dbReference>
<dbReference type="InterPro" id="IPR043129">
    <property type="entry name" value="ATPase_NBD"/>
</dbReference>
<dbReference type="InterPro" id="IPR004567">
    <property type="entry name" value="Type_II_PanK"/>
</dbReference>
<dbReference type="NCBIfam" id="TIGR00555">
    <property type="entry name" value="panK_eukar"/>
    <property type="match status" value="1"/>
</dbReference>
<dbReference type="PANTHER" id="PTHR12280">
    <property type="entry name" value="PANTOTHENATE KINASE"/>
    <property type="match status" value="1"/>
</dbReference>
<dbReference type="PANTHER" id="PTHR12280:SF25">
    <property type="entry name" value="PANTOTHENATE KINASE 2, MITOCHONDRIAL"/>
    <property type="match status" value="1"/>
</dbReference>
<dbReference type="Pfam" id="PF03630">
    <property type="entry name" value="Fumble"/>
    <property type="match status" value="1"/>
</dbReference>
<dbReference type="SUPFAM" id="SSF53067">
    <property type="entry name" value="Actin-like ATPase domain"/>
    <property type="match status" value="2"/>
</dbReference>
<comment type="function">
    <molecule>Isoform 1</molecule>
    <text evidence="8 10 11 12 18">Mitochondrial isoform that catalyzes the phosphorylation of pantothenate to generate 4'-phosphopantothenate in the first and rate-determining step of coenzyme A (CoA) synthesis (PubMed:15659606, PubMed:16272150, PubMed:17242360, PubMed:17825826). Required for angiogenic activity of umbilical vein of endothelial cells (HUVEC) (PubMed:30221726).</text>
</comment>
<comment type="function">
    <molecule>Isoform 4</molecule>
    <text evidence="10">Cytoplasmic isoform that catalyzes the phosphorylation of pantothenate to generate 4'-phosphopantothenate in the first and rate-determining step of coenzyme A (CoA) synthesis.</text>
</comment>
<comment type="catalytic activity">
    <molecule>Isoform 1</molecule>
    <reaction evidence="8 10 11 12">
        <text>(R)-pantothenate + ATP = (R)-4'-phosphopantothenate + ADP + H(+)</text>
        <dbReference type="Rhea" id="RHEA:16373"/>
        <dbReference type="ChEBI" id="CHEBI:10986"/>
        <dbReference type="ChEBI" id="CHEBI:15378"/>
        <dbReference type="ChEBI" id="CHEBI:29032"/>
        <dbReference type="ChEBI" id="CHEBI:30616"/>
        <dbReference type="ChEBI" id="CHEBI:456216"/>
        <dbReference type="EC" id="2.7.1.33"/>
    </reaction>
</comment>
<comment type="catalytic activity">
    <molecule>Isoform 4</molecule>
    <reaction evidence="10">
        <text>(R)-pantothenate + ATP = (R)-4'-phosphopantothenate + ADP + H(+)</text>
        <dbReference type="Rhea" id="RHEA:16373"/>
        <dbReference type="ChEBI" id="CHEBI:10986"/>
        <dbReference type="ChEBI" id="CHEBI:15378"/>
        <dbReference type="ChEBI" id="CHEBI:29032"/>
        <dbReference type="ChEBI" id="CHEBI:30616"/>
        <dbReference type="ChEBI" id="CHEBI:456216"/>
        <dbReference type="EC" id="2.7.1.33"/>
    </reaction>
</comment>
<comment type="activity regulation">
    <molecule>Isoform 1</molecule>
    <text evidence="8 10 11 12">Strongly inhibited by acetyl-CoA and its thioesters (PubMed:15659606, PubMed:16272150, PubMed:17242360, PubMed:17825826). Activated by palmitoylcarnitine (PubMed:17242360, PubMed:17825826).</text>
</comment>
<comment type="biophysicochemical properties">
    <kinetics>
        <KM evidence="10">25.4 uM for pantothenate</KM>
        <KM evidence="10">63.6 uM for ATP</KM>
        <Vmax evidence="10">92.0 pmol/min/mg enzyme for pantothenate</Vmax>
        <Vmax evidence="10">90.2 pmol/min/mg enzyme for ATP</Vmax>
    </kinetics>
</comment>
<comment type="pathway">
    <text evidence="8 10 11 12">Cofactor biosynthesis; coenzyme A biosynthesis; CoA from (R)-pantothenate: step 1/5.</text>
</comment>
<comment type="subunit">
    <text evidence="8 10 11">Homodimer.</text>
</comment>
<comment type="interaction">
    <interactant intactId="EBI-1058434">
        <id>Q9BZ23</id>
    </interactant>
    <interactant intactId="EBI-347088">
        <id>P63104</id>
        <label>YWHAZ</label>
    </interactant>
    <organismsDiffer>false</organismsDiffer>
    <experiments>2</experiments>
</comment>
<comment type="interaction">
    <interactant intactId="EBI-25929070">
        <id>Q9BZ23-2</id>
    </interactant>
    <interactant intactId="EBI-16436655">
        <id>Q6H8Q1-8</id>
        <label>ABLIM2</label>
    </interactant>
    <organismsDiffer>false</organismsDiffer>
    <experiments>3</experiments>
</comment>
<comment type="interaction">
    <interactant intactId="EBI-25929070">
        <id>Q9BZ23-2</id>
    </interactant>
    <interactant intactId="EBI-25884472">
        <id>P26436</id>
        <label>ACRV1</label>
    </interactant>
    <organismsDiffer>false</organismsDiffer>
    <experiments>3</experiments>
</comment>
<comment type="interaction">
    <interactant intactId="EBI-25929070">
        <id>Q9BZ23-2</id>
    </interactant>
    <interactant intactId="EBI-707573">
        <id>Q8WXK3</id>
        <label>ASB13</label>
    </interactant>
    <organismsDiffer>false</organismsDiffer>
    <experiments>3</experiments>
</comment>
<comment type="interaction">
    <interactant intactId="EBI-25929070">
        <id>Q9BZ23-2</id>
    </interactant>
    <interactant intactId="EBI-2410266">
        <id>Q8WXF7</id>
        <label>ATL1</label>
    </interactant>
    <organismsDiffer>false</organismsDiffer>
    <experiments>3</experiments>
</comment>
<comment type="interaction">
    <interactant intactId="EBI-25929070">
        <id>Q9BZ23-2</id>
    </interactant>
    <interactant intactId="EBI-350590">
        <id>Q9UNS2</id>
        <label>COPS3</label>
    </interactant>
    <organismsDiffer>false</organismsDiffer>
    <experiments>3</experiments>
</comment>
<comment type="interaction">
    <interactant intactId="EBI-25929070">
        <id>Q9BZ23-2</id>
    </interactant>
    <interactant intactId="EBI-395719">
        <id>Q99871</id>
        <label>HAUS7</label>
    </interactant>
    <organismsDiffer>false</organismsDiffer>
    <experiments>3</experiments>
</comment>
<comment type="interaction">
    <interactant intactId="EBI-25929070">
        <id>Q9BZ23-2</id>
    </interactant>
    <interactant intactId="EBI-12906008">
        <id>Q6P1K2-3</id>
        <label>PMF1</label>
    </interactant>
    <organismsDiffer>false</organismsDiffer>
    <experiments>3</experiments>
</comment>
<comment type="interaction">
    <interactant intactId="EBI-25929070">
        <id>Q9BZ23-2</id>
    </interactant>
    <interactant intactId="EBI-2340642">
        <id>Q969K3</id>
        <label>RNF34</label>
    </interactant>
    <organismsDiffer>false</organismsDiffer>
    <experiments>3</experiments>
</comment>
<comment type="interaction">
    <interactant intactId="EBI-25929070">
        <id>Q9BZ23-2</id>
    </interactant>
    <interactant intactId="EBI-358545">
        <id>Q9GZS3</id>
        <label>SKIC8</label>
    </interactant>
    <organismsDiffer>false</organismsDiffer>
    <experiments>3</experiments>
</comment>
<comment type="interaction">
    <interactant intactId="EBI-25929070">
        <id>Q9BZ23-2</id>
    </interactant>
    <interactant intactId="EBI-3942425">
        <id>Q8WXH5</id>
        <label>SOCS4</label>
    </interactant>
    <organismsDiffer>false</organismsDiffer>
    <experiments>3</experiments>
</comment>
<comment type="interaction">
    <interactant intactId="EBI-25929070">
        <id>Q9BZ23-2</id>
    </interactant>
    <interactant intactId="EBI-357085">
        <id>Q9UNE7</id>
        <label>STUB1</label>
    </interactant>
    <organismsDiffer>false</organismsDiffer>
    <experiments>3</experiments>
</comment>
<comment type="subcellular location">
    <molecule>Isoform 1</molecule>
    <subcellularLocation>
        <location evidence="7 8 12">Mitochondrion</location>
    </subcellularLocation>
    <subcellularLocation>
        <location evidence="14">Mitochondrion intermembrane space</location>
    </subcellularLocation>
    <subcellularLocation>
        <location evidence="14">Nucleus</location>
    </subcellularLocation>
    <text evidence="14">Localizes predominantly to the mitochondria and to a lesser extent to the nucleus. Found in both the mitochondria and the nucleus throughout the cell cycle, with the exception of the G2/M phase when it is restricted to mitochdondria.</text>
</comment>
<comment type="subcellular location">
    <molecule>Isoform 2</molecule>
    <subcellularLocation>
        <location evidence="21">Cytoplasm</location>
    </subcellularLocation>
</comment>
<comment type="subcellular location">
    <molecule>Isoform 3</molecule>
    <subcellularLocation>
        <location evidence="7 21">Cytoplasm</location>
    </subcellularLocation>
</comment>
<comment type="subcellular location">
    <molecule>Isoform 4</molecule>
    <subcellularLocation>
        <location evidence="21">Cytoplasm</location>
    </subcellularLocation>
</comment>
<comment type="alternative products">
    <event type="alternative splicing"/>
    <event type="alternative initiation"/>
    <isoform>
        <id>Q9BZ23-1</id>
        <name>1</name>
        <sequence type="displayed"/>
    </isoform>
    <isoform>
        <id>Q9BZ23-2</id>
        <name>3</name>
        <sequence type="described" ref="VSP_007424"/>
    </isoform>
    <isoform>
        <id>Q9BZ23-3</id>
        <name>2</name>
        <sequence type="described" ref="VSP_018825"/>
    </isoform>
    <isoform>
        <id>Q9BZ23-4</id>
        <name>4</name>
        <sequence type="described" ref="VSP_038494 VSP_038495"/>
    </isoform>
</comment>
<comment type="tissue specificity">
    <text evidence="4 8 12 18">Expressed in the brain (at protein level) (PubMed:15659606, PubMed:17825826). Ubiquitous (PubMed:11479594). Highly expressed in the testis (PubMed:17825826). Expressed in the umbilical vein endothelial cells (HUVEC) (PubMed:30221726).</text>
</comment>
<comment type="PTM">
    <text evidence="8 10">Synthesized as a 62-kDa precursor which is proteolytically processed by the mitochondrial-processing peptidase (MPP) via a 59-kDa intermediate to yield the mature mitochondrial 48-kDa subunit.</text>
</comment>
<comment type="disease" evidence="4 5 6 8 9 10 13 15 16 17">
    <disease id="DI-02126">
        <name>Neurodegeneration with brain iron accumulation 1</name>
        <acronym>NBIA1</acronym>
        <description>Autosomal recessive neurodegenerative disorder associated with iron accumulation in the brain, primarily in the basal ganglia. Clinical manifestations include progressive muscle spasticity, hyperreflexia, muscle rigidity, dystonia, dysarthria, and intellectual deterioration which progresses to severe dementia over several years. It is clinically classified into classic, atypical, and intermediate phenotypes. Classic forms present with onset in first decade, rapid progression, loss of independent ambulation within 15 years. Atypical forms have onset in second decade, slow progression, maintenance of independent ambulation up to 40 years later. Intermediate forms manifest onset in first decade with slow progression or onset in second decade with rapid progression. Patients with early onset tend to also develop pigmentary retinopathy, whereas those with later onset tend to also have speech disorders and psychiatric features. All patients have the 'eye of the tiger' sign on brain MRI.</description>
        <dbReference type="MIM" id="234200"/>
    </disease>
    <text>The disease is caused by variants affecting the gene represented in this entry.</text>
</comment>
<comment type="miscellaneous">
    <text>The HSS syndrome has been proposed to be renamed because of the unethical activities of Julius Hallervorden and Hugo Spatz during world war II.</text>
</comment>
<comment type="miscellaneous">
    <molecule>Isoform 2</molecule>
    <text evidence="21">Produced by alternative initiation at Met-124 of isoform 1.</text>
</comment>
<comment type="miscellaneous">
    <molecule>Isoform 4</molecule>
    <text evidence="21">May be produced by alternative initiation at Leu-111 of isoform 1.</text>
</comment>
<comment type="similarity">
    <text evidence="21">Belongs to the type II pantothenate kinase family.</text>
</comment>
<comment type="sequence caution" evidence="21">
    <conflict type="erroneous initiation">
        <sequence resource="EMBL-CDS" id="BAC05173"/>
    </conflict>
</comment>
<proteinExistence type="evidence at protein level"/>
<evidence type="ECO:0000250" key="1">
    <source>
        <dbReference type="UniProtKB" id="Q8TE04"/>
    </source>
</evidence>
<evidence type="ECO:0000250" key="2">
    <source>
        <dbReference type="UniProtKB" id="Q9H999"/>
    </source>
</evidence>
<evidence type="ECO:0000256" key="3">
    <source>
        <dbReference type="SAM" id="MobiDB-lite"/>
    </source>
</evidence>
<evidence type="ECO:0000269" key="4">
    <source>
    </source>
</evidence>
<evidence type="ECO:0000269" key="5">
    <source>
    </source>
</evidence>
<evidence type="ECO:0000269" key="6">
    <source>
    </source>
</evidence>
<evidence type="ECO:0000269" key="7">
    <source>
    </source>
</evidence>
<evidence type="ECO:0000269" key="8">
    <source>
    </source>
</evidence>
<evidence type="ECO:0000269" key="9">
    <source>
    </source>
</evidence>
<evidence type="ECO:0000269" key="10">
    <source>
    </source>
</evidence>
<evidence type="ECO:0000269" key="11">
    <source>
    </source>
</evidence>
<evidence type="ECO:0000269" key="12">
    <source>
    </source>
</evidence>
<evidence type="ECO:0000269" key="13">
    <source>
    </source>
</evidence>
<evidence type="ECO:0000269" key="14">
    <source>
    </source>
</evidence>
<evidence type="ECO:0000269" key="15">
    <source>
    </source>
</evidence>
<evidence type="ECO:0000269" key="16">
    <source>
    </source>
</evidence>
<evidence type="ECO:0000269" key="17">
    <source>
    </source>
</evidence>
<evidence type="ECO:0000269" key="18">
    <source>
    </source>
</evidence>
<evidence type="ECO:0000269" key="19">
    <source ref="3"/>
</evidence>
<evidence type="ECO:0000303" key="20">
    <source>
    </source>
</evidence>
<evidence type="ECO:0000305" key="21"/>
<evidence type="ECO:0007744" key="22">
    <source>
    </source>
</evidence>
<evidence type="ECO:0007744" key="23">
    <source>
    </source>
</evidence>
<evidence type="ECO:0007744" key="24">
    <source>
    </source>
</evidence>
<evidence type="ECO:0007744" key="25">
    <source>
    </source>
</evidence>
<evidence type="ECO:0007744" key="26">
    <source>
    </source>
</evidence>
<evidence type="ECO:0007744" key="27">
    <source>
    </source>
</evidence>
<evidence type="ECO:0007829" key="28">
    <source>
        <dbReference type="PDB" id="5E26"/>
    </source>
</evidence>
<protein>
    <recommendedName>
        <fullName>Pantothenate kinase 2, mitochondrial</fullName>
        <shortName>hPanK2</shortName>
        <ecNumber evidence="8 10 11 12">2.7.1.33</ecNumber>
    </recommendedName>
    <alternativeName>
        <fullName>Pantothenic acid kinase 2</fullName>
    </alternativeName>
    <component>
        <recommendedName>
            <fullName>Pantothenate kinase 2, mitochondrial intermediate form</fullName>
            <shortName>iPanK2</shortName>
        </recommendedName>
    </component>
    <component>
        <recommendedName>
            <fullName>Pantothenate kinase 2, mitochondrial mature form</fullName>
            <shortName>mPanK2</shortName>
        </recommendedName>
    </component>
</protein>
<reference key="1">
    <citation type="journal article" date="2003" name="Hum. Mol. Genet.">
        <title>An isoform of hPANK2, deficient in pantothenate kinase-associated neurodegeneration, localizes to mitochondria.</title>
        <authorList>
            <person name="Hoertnagel K."/>
            <person name="Prokisch H."/>
            <person name="Meitinger T."/>
        </authorList>
    </citation>
    <scope>NUCLEOTIDE SEQUENCE [MRNA] (ISOFORM 1)</scope>
    <scope>ALTERNATIVE SPLICING (ISOFORM 3)</scope>
    <scope>VARIANT ALA-126</scope>
    <scope>SUBCELLULAR LOCATION (ISOFORMS 1 AND 3)</scope>
    <source>
        <tissue>Brain</tissue>
    </source>
</reference>
<reference key="2">
    <citation type="journal article" date="2004" name="Nat. Genet.">
        <title>Complete sequencing and characterization of 21,243 full-length human cDNAs.</title>
        <authorList>
            <person name="Ota T."/>
            <person name="Suzuki Y."/>
            <person name="Nishikawa T."/>
            <person name="Otsuki T."/>
            <person name="Sugiyama T."/>
            <person name="Irie R."/>
            <person name="Wakamatsu A."/>
            <person name="Hayashi K."/>
            <person name="Sato H."/>
            <person name="Nagai K."/>
            <person name="Kimura K."/>
            <person name="Makita H."/>
            <person name="Sekine M."/>
            <person name="Obayashi M."/>
            <person name="Nishi T."/>
            <person name="Shibahara T."/>
            <person name="Tanaka T."/>
            <person name="Ishii S."/>
            <person name="Yamamoto J."/>
            <person name="Saito K."/>
            <person name="Kawai Y."/>
            <person name="Isono Y."/>
            <person name="Nakamura Y."/>
            <person name="Nagahari K."/>
            <person name="Murakami K."/>
            <person name="Yasuda T."/>
            <person name="Iwayanagi T."/>
            <person name="Wagatsuma M."/>
            <person name="Shiratori A."/>
            <person name="Sudo H."/>
            <person name="Hosoiri T."/>
            <person name="Kaku Y."/>
            <person name="Kodaira H."/>
            <person name="Kondo H."/>
            <person name="Sugawara M."/>
            <person name="Takahashi M."/>
            <person name="Kanda K."/>
            <person name="Yokoi T."/>
            <person name="Furuya T."/>
            <person name="Kikkawa E."/>
            <person name="Omura Y."/>
            <person name="Abe K."/>
            <person name="Kamihara K."/>
            <person name="Katsuta N."/>
            <person name="Sato K."/>
            <person name="Tanikawa M."/>
            <person name="Yamazaki M."/>
            <person name="Ninomiya K."/>
            <person name="Ishibashi T."/>
            <person name="Yamashita H."/>
            <person name="Murakawa K."/>
            <person name="Fujimori K."/>
            <person name="Tanai H."/>
            <person name="Kimata M."/>
            <person name="Watanabe M."/>
            <person name="Hiraoka S."/>
            <person name="Chiba Y."/>
            <person name="Ishida S."/>
            <person name="Ono Y."/>
            <person name="Takiguchi S."/>
            <person name="Watanabe S."/>
            <person name="Yosida M."/>
            <person name="Hotuta T."/>
            <person name="Kusano J."/>
            <person name="Kanehori K."/>
            <person name="Takahashi-Fujii A."/>
            <person name="Hara H."/>
            <person name="Tanase T.-O."/>
            <person name="Nomura Y."/>
            <person name="Togiya S."/>
            <person name="Komai F."/>
            <person name="Hara R."/>
            <person name="Takeuchi K."/>
            <person name="Arita M."/>
            <person name="Imose N."/>
            <person name="Musashino K."/>
            <person name="Yuuki H."/>
            <person name="Oshima A."/>
            <person name="Sasaki N."/>
            <person name="Aotsuka S."/>
            <person name="Yoshikawa Y."/>
            <person name="Matsunawa H."/>
            <person name="Ichihara T."/>
            <person name="Shiohata N."/>
            <person name="Sano S."/>
            <person name="Moriya S."/>
            <person name="Momiyama H."/>
            <person name="Satoh N."/>
            <person name="Takami S."/>
            <person name="Terashima Y."/>
            <person name="Suzuki O."/>
            <person name="Nakagawa S."/>
            <person name="Senoh A."/>
            <person name="Mizoguchi H."/>
            <person name="Goto Y."/>
            <person name="Shimizu F."/>
            <person name="Wakebe H."/>
            <person name="Hishigaki H."/>
            <person name="Watanabe T."/>
            <person name="Sugiyama A."/>
            <person name="Takemoto M."/>
            <person name="Kawakami B."/>
            <person name="Yamazaki M."/>
            <person name="Watanabe K."/>
            <person name="Kumagai A."/>
            <person name="Itakura S."/>
            <person name="Fukuzumi Y."/>
            <person name="Fujimori Y."/>
            <person name="Komiyama M."/>
            <person name="Tashiro H."/>
            <person name="Tanigami A."/>
            <person name="Fujiwara T."/>
            <person name="Ono T."/>
            <person name="Yamada K."/>
            <person name="Fujii Y."/>
            <person name="Ozaki K."/>
            <person name="Hirao M."/>
            <person name="Ohmori Y."/>
            <person name="Kawabata A."/>
            <person name="Hikiji T."/>
            <person name="Kobatake N."/>
            <person name="Inagaki H."/>
            <person name="Ikema Y."/>
            <person name="Okamoto S."/>
            <person name="Okitani R."/>
            <person name="Kawakami T."/>
            <person name="Noguchi S."/>
            <person name="Itoh T."/>
            <person name="Shigeta K."/>
            <person name="Senba T."/>
            <person name="Matsumura K."/>
            <person name="Nakajima Y."/>
            <person name="Mizuno T."/>
            <person name="Morinaga M."/>
            <person name="Sasaki M."/>
            <person name="Togashi T."/>
            <person name="Oyama M."/>
            <person name="Hata H."/>
            <person name="Watanabe M."/>
            <person name="Komatsu T."/>
            <person name="Mizushima-Sugano J."/>
            <person name="Satoh T."/>
            <person name="Shirai Y."/>
            <person name="Takahashi Y."/>
            <person name="Nakagawa K."/>
            <person name="Okumura K."/>
            <person name="Nagase T."/>
            <person name="Nomura N."/>
            <person name="Kikuchi H."/>
            <person name="Masuho Y."/>
            <person name="Yamashita R."/>
            <person name="Nakai K."/>
            <person name="Yada T."/>
            <person name="Nakamura Y."/>
            <person name="Ohara O."/>
            <person name="Isogai T."/>
            <person name="Sugano S."/>
        </authorList>
    </citation>
    <scope>NUCLEOTIDE SEQUENCE [LARGE SCALE MRNA] (ISOFORM 3)</scope>
    <scope>NUCLEOTIDE SEQUENCE [LARGE SCALE MRNA] OF 106-570 (ISOFORM 1)</scope>
    <source>
        <tissue>Testis</tissue>
    </source>
</reference>
<reference key="3">
    <citation type="submission" date="2008-03" db="EMBL/GenBank/DDBJ databases">
        <authorList>
            <consortium name="NIEHS SNPs program"/>
        </authorList>
    </citation>
    <scope>NUCLEOTIDE SEQUENCE [GENOMIC DNA]</scope>
    <scope>VARIANTS PRO-94; GLN-111 AND ALA-126</scope>
</reference>
<reference key="4">
    <citation type="journal article" date="2001" name="Nature">
        <title>The DNA sequence and comparative analysis of human chromosome 20.</title>
        <authorList>
            <person name="Deloukas P."/>
            <person name="Matthews L.H."/>
            <person name="Ashurst J.L."/>
            <person name="Burton J."/>
            <person name="Gilbert J.G.R."/>
            <person name="Jones M."/>
            <person name="Stavrides G."/>
            <person name="Almeida J.P."/>
            <person name="Babbage A.K."/>
            <person name="Bagguley C.L."/>
            <person name="Bailey J."/>
            <person name="Barlow K.F."/>
            <person name="Bates K.N."/>
            <person name="Beard L.M."/>
            <person name="Beare D.M."/>
            <person name="Beasley O.P."/>
            <person name="Bird C.P."/>
            <person name="Blakey S.E."/>
            <person name="Bridgeman A.M."/>
            <person name="Brown A.J."/>
            <person name="Buck D."/>
            <person name="Burrill W.D."/>
            <person name="Butler A.P."/>
            <person name="Carder C."/>
            <person name="Carter N.P."/>
            <person name="Chapman J.C."/>
            <person name="Clamp M."/>
            <person name="Clark G."/>
            <person name="Clark L.N."/>
            <person name="Clark S.Y."/>
            <person name="Clee C.M."/>
            <person name="Clegg S."/>
            <person name="Cobley V.E."/>
            <person name="Collier R.E."/>
            <person name="Connor R.E."/>
            <person name="Corby N.R."/>
            <person name="Coulson A."/>
            <person name="Coville G.J."/>
            <person name="Deadman R."/>
            <person name="Dhami P.D."/>
            <person name="Dunn M."/>
            <person name="Ellington A.G."/>
            <person name="Frankland J.A."/>
            <person name="Fraser A."/>
            <person name="French L."/>
            <person name="Garner P."/>
            <person name="Grafham D.V."/>
            <person name="Griffiths C."/>
            <person name="Griffiths M.N.D."/>
            <person name="Gwilliam R."/>
            <person name="Hall R.E."/>
            <person name="Hammond S."/>
            <person name="Harley J.L."/>
            <person name="Heath P.D."/>
            <person name="Ho S."/>
            <person name="Holden J.L."/>
            <person name="Howden P.J."/>
            <person name="Huckle E."/>
            <person name="Hunt A.R."/>
            <person name="Hunt S.E."/>
            <person name="Jekosch K."/>
            <person name="Johnson C.M."/>
            <person name="Johnson D."/>
            <person name="Kay M.P."/>
            <person name="Kimberley A.M."/>
            <person name="King A."/>
            <person name="Knights A."/>
            <person name="Laird G.K."/>
            <person name="Lawlor S."/>
            <person name="Lehvaeslaiho M.H."/>
            <person name="Leversha M.A."/>
            <person name="Lloyd C."/>
            <person name="Lloyd D.M."/>
            <person name="Lovell J.D."/>
            <person name="Marsh V.L."/>
            <person name="Martin S.L."/>
            <person name="McConnachie L.J."/>
            <person name="McLay K."/>
            <person name="McMurray A.A."/>
            <person name="Milne S.A."/>
            <person name="Mistry D."/>
            <person name="Moore M.J.F."/>
            <person name="Mullikin J.C."/>
            <person name="Nickerson T."/>
            <person name="Oliver K."/>
            <person name="Parker A."/>
            <person name="Patel R."/>
            <person name="Pearce T.A.V."/>
            <person name="Peck A.I."/>
            <person name="Phillimore B.J.C.T."/>
            <person name="Prathalingam S.R."/>
            <person name="Plumb R.W."/>
            <person name="Ramsay H."/>
            <person name="Rice C.M."/>
            <person name="Ross M.T."/>
            <person name="Scott C.E."/>
            <person name="Sehra H.K."/>
            <person name="Shownkeen R."/>
            <person name="Sims S."/>
            <person name="Skuce C.D."/>
            <person name="Smith M.L."/>
            <person name="Soderlund C."/>
            <person name="Steward C.A."/>
            <person name="Sulston J.E."/>
            <person name="Swann R.M."/>
            <person name="Sycamore N."/>
            <person name="Taylor R."/>
            <person name="Tee L."/>
            <person name="Thomas D.W."/>
            <person name="Thorpe A."/>
            <person name="Tracey A."/>
            <person name="Tromans A.C."/>
            <person name="Vaudin M."/>
            <person name="Wall M."/>
            <person name="Wallis J.M."/>
            <person name="Whitehead S.L."/>
            <person name="Whittaker P."/>
            <person name="Willey D.L."/>
            <person name="Williams L."/>
            <person name="Williams S.A."/>
            <person name="Wilming L."/>
            <person name="Wray P.W."/>
            <person name="Hubbard T."/>
            <person name="Durbin R.M."/>
            <person name="Bentley D.R."/>
            <person name="Beck S."/>
            <person name="Rogers J."/>
        </authorList>
    </citation>
    <scope>NUCLEOTIDE SEQUENCE [LARGE SCALE GENOMIC DNA]</scope>
</reference>
<reference key="5">
    <citation type="submission" date="2005-09" db="EMBL/GenBank/DDBJ databases">
        <authorList>
            <person name="Mural R.J."/>
            <person name="Istrail S."/>
            <person name="Sutton G.G."/>
            <person name="Florea L."/>
            <person name="Halpern A.L."/>
            <person name="Mobarry C.M."/>
            <person name="Lippert R."/>
            <person name="Walenz B."/>
            <person name="Shatkay H."/>
            <person name="Dew I."/>
            <person name="Miller J.R."/>
            <person name="Flanigan M.J."/>
            <person name="Edwards N.J."/>
            <person name="Bolanos R."/>
            <person name="Fasulo D."/>
            <person name="Halldorsson B.V."/>
            <person name="Hannenhalli S."/>
            <person name="Turner R."/>
            <person name="Yooseph S."/>
            <person name="Lu F."/>
            <person name="Nusskern D.R."/>
            <person name="Shue B.C."/>
            <person name="Zheng X.H."/>
            <person name="Zhong F."/>
            <person name="Delcher A.L."/>
            <person name="Huson D.H."/>
            <person name="Kravitz S.A."/>
            <person name="Mouchard L."/>
            <person name="Reinert K."/>
            <person name="Remington K.A."/>
            <person name="Clark A.G."/>
            <person name="Waterman M.S."/>
            <person name="Eichler E.E."/>
            <person name="Adams M.D."/>
            <person name="Hunkapiller M.W."/>
            <person name="Myers E.W."/>
            <person name="Venter J.C."/>
        </authorList>
    </citation>
    <scope>NUCLEOTIDE SEQUENCE [LARGE SCALE GENOMIC DNA]</scope>
</reference>
<reference key="6">
    <citation type="journal article" date="2007" name="BMC Genomics">
        <title>The full-ORF clone resource of the German cDNA consortium.</title>
        <authorList>
            <person name="Bechtel S."/>
            <person name="Rosenfelder H."/>
            <person name="Duda A."/>
            <person name="Schmidt C.P."/>
            <person name="Ernst U."/>
            <person name="Wellenreuther R."/>
            <person name="Mehrle A."/>
            <person name="Schuster C."/>
            <person name="Bahr A."/>
            <person name="Bloecker H."/>
            <person name="Heubner D."/>
            <person name="Hoerlein A."/>
            <person name="Michel G."/>
            <person name="Wedler H."/>
            <person name="Koehrer K."/>
            <person name="Ottenwaelder B."/>
            <person name="Poustka A."/>
            <person name="Wiemann S."/>
            <person name="Schupp I."/>
        </authorList>
    </citation>
    <scope>NUCLEOTIDE SEQUENCE [LARGE SCALE MRNA] OF 406-570</scope>
    <source>
        <tissue>Brain</tissue>
    </source>
</reference>
<reference key="7">
    <citation type="journal article" date="2005" name="J. Neurosci.">
        <title>Altered neuronal mitochondrial coenzyme A synthesis in neurodegeneration with brain iron accumulation caused by abnormal processing, stability, and catalytic activity of mutant pantothenate kinase 2.</title>
        <authorList>
            <person name="Kotzbauer P.T."/>
            <person name="Truax A.C."/>
            <person name="Trojanowski J.Q."/>
            <person name="Lee V.M."/>
        </authorList>
    </citation>
    <scope>PROTEIN SEQUENCE OF N-TERMINUS</scope>
    <scope>CHARACTERIZATION OF VARIANTS NBIA1 GLY-134; VAL-219; ALA-234; ASN-471; ARG-521 AND MET-528</scope>
    <scope>PROTEOLYTIC PROCESSING BY MPP</scope>
    <scope>CLEAVAGE SITE</scope>
    <scope>FUNCTION (ISOFORM 1)</scope>
    <scope>CATALYTIC ACTIVITY (ISOFORM 1)</scope>
    <scope>SUBCELLULAR LOCATION (ISOFORM 1)</scope>
    <scope>SUBUNIT</scope>
    <scope>ACTIVITY REGULATION (ISOFORM 1)</scope>
    <scope>TISSUE SPECIFICITY</scope>
</reference>
<reference key="8">
    <citation type="journal article" date="2001" name="Nat. Genet.">
        <title>A novel pantothenate kinase gene (PANK2) is defective in Hallervorden-Spatz syndrome.</title>
        <authorList>
            <person name="Zhou B."/>
            <person name="Westaway S.K."/>
            <person name="Levinson B."/>
            <person name="Johnson M.A."/>
            <person name="Gitschier J."/>
            <person name="Hayflick S.J."/>
        </authorList>
    </citation>
    <scope>IDENTIFICATION</scope>
    <scope>ALTERNATIVE INITIATION AT LEU-111</scope>
    <scope>VARIANTS GLN-111 AND ALA-126</scope>
    <scope>VARIANTS NBIA1 VAL-219; ALA-234; TRP-264; CYS-278; VAL-282; CYS-286; ILE-327; PRO-351; SER-355; ILE-404; PRO-413; ASN-471; THR-497; ILE-500; ARG-521 AND MET-528</scope>
    <scope>TISSUE SPECIFICITY</scope>
</reference>
<reference key="9">
    <citation type="journal article" date="2002" name="Neurology">
        <title>HARP syndrome is allelic with pantothenate kinase-associated neurodegeneration.</title>
        <authorList>
            <person name="Ching K.H.L."/>
            <person name="Westaway S.K."/>
            <person name="Gitschier J."/>
            <person name="Higgins J.J."/>
            <person name="Hayflick S.J."/>
        </authorList>
    </citation>
    <scope>INVOLVEMENT IN NBIA1</scope>
</reference>
<reference key="10">
    <citation type="journal article" date="2007" name="FEBS Lett.">
        <title>Localization and regulation of mouse pantothenate kinase 2.</title>
        <authorList>
            <person name="Leonardi R."/>
            <person name="Zhang Y.M."/>
            <person name="Lykidis A."/>
            <person name="Rock C.O."/>
            <person name="Jackowski S."/>
        </authorList>
    </citation>
    <scope>FUNCTION (ISOFORM 1)</scope>
    <scope>CATALYTIC ACTIVITY (ISOFORM 1)</scope>
    <scope>ACTIVITY REGULATION (ISOFORM 1)</scope>
    <scope>SUBCELLULAR LOCATION (ISOFORM 1)</scope>
    <scope>TISSUE SPECIFICITY</scope>
</reference>
<reference key="11">
    <citation type="journal article" date="2007" name="Proc. Natl. Acad. Sci. U.S.A.">
        <title>Activation of human mitochondrial pantothenate kinase 2 by palmitoylcarnitine.</title>
        <authorList>
            <person name="Leonardi R."/>
            <person name="Rock C.O."/>
            <person name="Jackowski S."/>
            <person name="Zhang Y.M."/>
        </authorList>
    </citation>
    <scope>FUNCTION (ISOFORM 1)</scope>
    <scope>CATALYTIC ACTIVITY (ISOFORM 1)</scope>
    <scope>SUBUNIT</scope>
    <scope>ACTIVITY REGULATION (ISOFORM 1)</scope>
</reference>
<reference key="12">
    <citation type="journal article" date="2008" name="Mol. Cell">
        <title>Kinase-selective enrichment enables quantitative phosphoproteomics of the kinome across the cell cycle.</title>
        <authorList>
            <person name="Daub H."/>
            <person name="Olsen J.V."/>
            <person name="Bairlein M."/>
            <person name="Gnad F."/>
            <person name="Oppermann F.S."/>
            <person name="Korner R."/>
            <person name="Greff Z."/>
            <person name="Keri G."/>
            <person name="Stemmann O."/>
            <person name="Mann M."/>
        </authorList>
    </citation>
    <scope>IDENTIFICATION BY MASS SPECTROMETRY [LARGE SCALE ANALYSIS]</scope>
    <source>
        <tissue>Cervix carcinoma</tissue>
    </source>
</reference>
<reference key="13">
    <citation type="journal article" date="2008" name="Proc. Natl. Acad. Sci. U.S.A.">
        <title>A quantitative atlas of mitotic phosphorylation.</title>
        <authorList>
            <person name="Dephoure N."/>
            <person name="Zhou C."/>
            <person name="Villen J."/>
            <person name="Beausoleil S.A."/>
            <person name="Bakalarski C.E."/>
            <person name="Elledge S.J."/>
            <person name="Gygi S.P."/>
        </authorList>
    </citation>
    <scope>PHOSPHORYLATION [LARGE SCALE ANALYSIS] AT SER-168; SER-169 AND SER-189</scope>
    <scope>IDENTIFICATION BY MASS SPECTROMETRY [LARGE SCALE ANALYSIS]</scope>
    <source>
        <tissue>Cervix carcinoma</tissue>
    </source>
</reference>
<reference key="14">
    <citation type="journal article" date="2009" name="Sci. Signal.">
        <title>Quantitative phosphoproteomic analysis of T cell receptor signaling reveals system-wide modulation of protein-protein interactions.</title>
        <authorList>
            <person name="Mayya V."/>
            <person name="Lundgren D.H."/>
            <person name="Hwang S.-I."/>
            <person name="Rezaul K."/>
            <person name="Wu L."/>
            <person name="Eng J.K."/>
            <person name="Rodionov V."/>
            <person name="Han D.K."/>
        </authorList>
    </citation>
    <scope>PHOSPHORYLATION [LARGE SCALE ANALYSIS] AT SER-168; SER-169 AND SER-189</scope>
    <scope>IDENTIFICATION BY MASS SPECTROMETRY [LARGE SCALE ANALYSIS]</scope>
    <source>
        <tissue>Leukemic T-cell</tissue>
    </source>
</reference>
<reference key="15">
    <citation type="journal article" date="2010" name="Sci. Signal.">
        <title>Quantitative phosphoproteomics reveals widespread full phosphorylation site occupancy during mitosis.</title>
        <authorList>
            <person name="Olsen J.V."/>
            <person name="Vermeulen M."/>
            <person name="Santamaria A."/>
            <person name="Kumar C."/>
            <person name="Miller M.L."/>
            <person name="Jensen L.J."/>
            <person name="Gnad F."/>
            <person name="Cox J."/>
            <person name="Jensen T.S."/>
            <person name="Nigg E.A."/>
            <person name="Brunak S."/>
            <person name="Mann M."/>
        </authorList>
    </citation>
    <scope>PHOSPHORYLATION [LARGE SCALE ANALYSIS] AT SER-189</scope>
    <scope>IDENTIFICATION BY MASS SPECTROMETRY [LARGE SCALE ANALYSIS]</scope>
    <source>
        <tissue>Cervix carcinoma</tissue>
    </source>
</reference>
<reference key="16">
    <citation type="journal article" date="2011" name="Sci. Signal.">
        <title>System-wide temporal characterization of the proteome and phosphoproteome of human embryonic stem cell differentiation.</title>
        <authorList>
            <person name="Rigbolt K.T."/>
            <person name="Prokhorova T.A."/>
            <person name="Akimov V."/>
            <person name="Henningsen J."/>
            <person name="Johansen P.T."/>
            <person name="Kratchmarova I."/>
            <person name="Kassem M."/>
            <person name="Mann M."/>
            <person name="Olsen J.V."/>
            <person name="Blagoev B."/>
        </authorList>
    </citation>
    <scope>PHOSPHORYLATION [LARGE SCALE ANALYSIS] AT SER-168 AND SER-189</scope>
    <scope>IDENTIFICATION BY MASS SPECTROMETRY [LARGE SCALE ANALYSIS]</scope>
</reference>
<reference key="17">
    <citation type="journal article" date="2012" name="PLoS ONE">
        <title>Compartmentalization of mammalian pantothenate kinases.</title>
        <authorList>
            <person name="Alfonso-Pecchio A."/>
            <person name="Garcia M."/>
            <person name="Leonardi R."/>
            <person name="Jackowski S."/>
        </authorList>
    </citation>
    <scope>SUBCELLULAR LOCATION (ISOFORM 1)</scope>
    <scope>NUCLEAR LOCALIZATION SIGNAL</scope>
    <scope>NUCLEAR EXPORT SIGNAL</scope>
    <scope>MUTAGENESIS OF 82-ARG--ARG-94 AND 268-LEU--LEU-275</scope>
</reference>
<reference key="18">
    <citation type="journal article" date="2013" name="J. Proteome Res.">
        <title>Toward a comprehensive characterization of a human cancer cell phosphoproteome.</title>
        <authorList>
            <person name="Zhou H."/>
            <person name="Di Palma S."/>
            <person name="Preisinger C."/>
            <person name="Peng M."/>
            <person name="Polat A.N."/>
            <person name="Heck A.J."/>
            <person name="Mohammed S."/>
        </authorList>
    </citation>
    <scope>PHOSPHORYLATION [LARGE SCALE ANALYSIS] AT SER-168 AND SER-189</scope>
    <scope>IDENTIFICATION BY MASS SPECTROMETRY [LARGE SCALE ANALYSIS]</scope>
    <source>
        <tissue>Cervix carcinoma</tissue>
        <tissue>Erythroleukemia</tissue>
    </source>
</reference>
<reference key="19">
    <citation type="journal article" date="2014" name="J. Proteomics">
        <title>An enzyme assisted RP-RPLC approach for in-depth analysis of human liver phosphoproteome.</title>
        <authorList>
            <person name="Bian Y."/>
            <person name="Song C."/>
            <person name="Cheng K."/>
            <person name="Dong M."/>
            <person name="Wang F."/>
            <person name="Huang J."/>
            <person name="Sun D."/>
            <person name="Wang L."/>
            <person name="Ye M."/>
            <person name="Zou H."/>
        </authorList>
    </citation>
    <scope>PHOSPHORYLATION [LARGE SCALE ANALYSIS] AT SER-168 AND SER-189</scope>
    <scope>IDENTIFICATION BY MASS SPECTROMETRY [LARGE SCALE ANALYSIS]</scope>
    <source>
        <tissue>Liver</tissue>
    </source>
</reference>
<reference key="20">
    <citation type="journal article" date="2018" name="Mol. Med. Report.">
        <title>Silencing of pantothenate kinase 2 reduces endothelial cell angiogenesis.</title>
        <authorList>
            <person name="Pagani F."/>
            <person name="Trivedi A."/>
            <person name="Khatri D."/>
            <person name="Zizioli D."/>
            <person name="Garrafa E."/>
            <person name="Mitola S."/>
            <person name="Finazzi D."/>
        </authorList>
    </citation>
    <scope>FUNCTION (ISOFORM 1)</scope>
    <scope>TISSUE SPECIFICITY</scope>
</reference>
<reference key="21">
    <citation type="journal article" date="2003" name="N. Engl. J. Med.">
        <title>Genetic, clinical, and radiographic delineation of Hallervorden-Spatz syndrome.</title>
        <authorList>
            <person name="Hayflick S.J."/>
            <person name="Westaway S.K."/>
            <person name="Levinson B."/>
            <person name="Zhou B."/>
            <person name="Johnson M.A."/>
            <person name="Ching K.H."/>
            <person name="Gitschier J."/>
        </authorList>
    </citation>
    <scope>VARIANTS NBIA1 GLY-134; PRO-249; LEU-278; ASP-322; GLY-322; GLN-357; THR-398; LEU-425 DEL; TYR-428; ASN-447; THR-501; VAL-509; ASP-511; TRP-532; PRO-563 AND LEU-570</scope>
</reference>
<reference key="22">
    <citation type="journal article" date="2005" name="Mov. Disord.">
        <title>Atypical Hallervorden-Spatz disease with preserved cognition and obtrusive obsessions and compulsions.</title>
        <authorList>
            <person name="Nicholas A.P."/>
            <person name="Earnst K.S."/>
            <person name="Marson D.C."/>
        </authorList>
    </citation>
    <scope>VARIANTS NBIA1 ARG-521 AND LEU-570</scope>
</reference>
<reference key="23">
    <citation type="journal article" date="2006" name="J. Biol. Chem.">
        <title>Biochemical properties of human pantothenate kinase 2 isoforms and mutations linked to pantothenate kinase-associated neurodegeneration.</title>
        <authorList>
            <person name="Zhang Y.M."/>
            <person name="Rock C.O."/>
            <person name="Jackowski S."/>
        </authorList>
    </citation>
    <scope>CHARACTERIZATION OF VARIANTS NBIA1 VAL-219; ALA-234; TRP-264; CYS-286; ILE-327; PRO-351; ILE-404; ASN-471; ILE-500; VAL-509; ARG-521; MET-528 AND TRP-532</scope>
    <scope>FUNCTION (ISOFORMS 1 AND 4)</scope>
    <scope>CATALYTIC ACTIVITY (ISOFORMS 1 AND 4)</scope>
    <scope>SUBUNIT</scope>
    <scope>ACTIVITY REGULATION (ISOFORM 1)</scope>
    <scope>PROTEOLYTIC PROCESSING</scope>
    <scope>BIOPHYSICOCHEMICAL PROPERTIES</scope>
</reference>
<reference key="24">
    <citation type="journal article" date="2013" name="Eur. J. Med. Genet.">
        <title>A novel gene mutation in PANK2 in a patient with an atypical form of pantothenate kinase-associated neurodegeneration.</title>
        <authorList>
            <person name="Perez-Gonzalez E.A."/>
            <person name="Chacon-Camacho O.F."/>
            <person name="Arteaga-Vazquez J."/>
            <person name="Zenteno J.C."/>
            <person name="Mutchinick O.M."/>
        </authorList>
    </citation>
    <scope>VARIANTS NBIA1 ARG-521 AND SER-555</scope>
</reference>
<reference key="25">
    <citation type="journal article" date="2013" name="Neurol. Sci.">
        <title>Novel PANK2 gene mutations in two Chinese siblings with atypical pantothenate kinase-associated neurodegeneration.</title>
        <authorList>
            <person name="Shan J."/>
            <person name="Wen B."/>
            <person name="Zhu J."/>
            <person name="Lin P."/>
            <person name="Zheng J."/>
            <person name="Yan C."/>
        </authorList>
    </citation>
    <scope>VARIANT NBIA1 SER-377</scope>
</reference>
<reference key="26">
    <citation type="journal article" date="2014" name="J. Neurol. Sci.">
        <title>Novel homozygous PANK2 mutation causing atypical pantothenate kinase-associated neurodegeneration (PKAN) in a Cypriot family.</title>
        <authorList>
            <person name="Tanteles G.A."/>
            <person name="Spanou-Aristidou E."/>
            <person name="Antoniou C."/>
            <person name="Christophidou-Anastasiadou V."/>
            <person name="Kleopa K.A."/>
        </authorList>
    </citation>
    <scope>VARIANT NBIA1 GLY-232</scope>
</reference>
<reference key="27">
    <citation type="journal article" date="2016" name="Brain Dev.">
        <title>A novel gene mutation in PANK2 in a patient with severe jaw-opening dystonia.</title>
        <authorList>
            <person name="Yapici Z."/>
            <person name="Akcakaya N.H."/>
            <person name="Tekturk P."/>
            <person name="Iseri S.A."/>
            <person name="Ozbek U."/>
        </authorList>
    </citation>
    <scope>VARIANTS NBIA1 PRO-489 AND MET-528</scope>
</reference>